<gene>
    <name evidence="1" type="primary">pyrH</name>
    <name type="ordered locus">XOO1974</name>
</gene>
<evidence type="ECO:0000255" key="1">
    <source>
        <dbReference type="HAMAP-Rule" id="MF_01220"/>
    </source>
</evidence>
<evidence type="ECO:0000305" key="2"/>
<feature type="chain" id="PRO_0000323986" description="Uridylate kinase">
    <location>
        <begin position="1"/>
        <end position="240"/>
    </location>
</feature>
<feature type="binding site" evidence="1">
    <location>
        <begin position="12"/>
        <end position="15"/>
    </location>
    <ligand>
        <name>ATP</name>
        <dbReference type="ChEBI" id="CHEBI:30616"/>
    </ligand>
</feature>
<feature type="binding site" evidence="1">
    <location>
        <position position="54"/>
    </location>
    <ligand>
        <name>UMP</name>
        <dbReference type="ChEBI" id="CHEBI:57865"/>
    </ligand>
</feature>
<feature type="binding site" evidence="1">
    <location>
        <position position="55"/>
    </location>
    <ligand>
        <name>ATP</name>
        <dbReference type="ChEBI" id="CHEBI:30616"/>
    </ligand>
</feature>
<feature type="binding site" evidence="1">
    <location>
        <position position="59"/>
    </location>
    <ligand>
        <name>ATP</name>
        <dbReference type="ChEBI" id="CHEBI:30616"/>
    </ligand>
</feature>
<feature type="binding site" evidence="1">
    <location>
        <position position="74"/>
    </location>
    <ligand>
        <name>UMP</name>
        <dbReference type="ChEBI" id="CHEBI:57865"/>
    </ligand>
</feature>
<feature type="binding site" evidence="1">
    <location>
        <begin position="135"/>
        <end position="142"/>
    </location>
    <ligand>
        <name>UMP</name>
        <dbReference type="ChEBI" id="CHEBI:57865"/>
    </ligand>
</feature>
<feature type="binding site" evidence="1">
    <location>
        <position position="162"/>
    </location>
    <ligand>
        <name>ATP</name>
        <dbReference type="ChEBI" id="CHEBI:30616"/>
    </ligand>
</feature>
<feature type="binding site" evidence="1">
    <location>
        <position position="168"/>
    </location>
    <ligand>
        <name>ATP</name>
        <dbReference type="ChEBI" id="CHEBI:30616"/>
    </ligand>
</feature>
<feature type="binding site" evidence="1">
    <location>
        <position position="171"/>
    </location>
    <ligand>
        <name>ATP</name>
        <dbReference type="ChEBI" id="CHEBI:30616"/>
    </ligand>
</feature>
<accession>Q5H1E3</accession>
<organism>
    <name type="scientific">Xanthomonas oryzae pv. oryzae (strain KACC10331 / KXO85)</name>
    <dbReference type="NCBI Taxonomy" id="291331"/>
    <lineage>
        <taxon>Bacteria</taxon>
        <taxon>Pseudomonadati</taxon>
        <taxon>Pseudomonadota</taxon>
        <taxon>Gammaproteobacteria</taxon>
        <taxon>Lysobacterales</taxon>
        <taxon>Lysobacteraceae</taxon>
        <taxon>Xanthomonas</taxon>
    </lineage>
</organism>
<name>PYRH_XANOR</name>
<keyword id="KW-0067">ATP-binding</keyword>
<keyword id="KW-0963">Cytoplasm</keyword>
<keyword id="KW-0418">Kinase</keyword>
<keyword id="KW-0547">Nucleotide-binding</keyword>
<keyword id="KW-0665">Pyrimidine biosynthesis</keyword>
<keyword id="KW-1185">Reference proteome</keyword>
<keyword id="KW-0808">Transferase</keyword>
<sequence>MSELSYRRILLKLSGEALMGDGDYGIDPKVINRLAHEVIEAQQAGAQVALVIGGGNIFRGAGLAASGMDRVTGDHMGMLATVINALAMQDALEKLGAKVRVMSAIKINDVCEDFIRRRAIRHLEKGRIAIFAAGTGNPFFTTDSGAALRAIEIGADLLLKATKVDGVYDKDPKKHTDAVRYDSLTYDQVIMQDLEVMDTAAFALARDSDLPLRIFGMSEPGVLLRILHGEQIGTLVQGRS</sequence>
<reference key="1">
    <citation type="journal article" date="2005" name="Nucleic Acids Res.">
        <title>The genome sequence of Xanthomonas oryzae pathovar oryzae KACC10331, the bacterial blight pathogen of rice.</title>
        <authorList>
            <person name="Lee B.-M."/>
            <person name="Park Y.-J."/>
            <person name="Park D.-S."/>
            <person name="Kang H.-W."/>
            <person name="Kim J.-G."/>
            <person name="Song E.-S."/>
            <person name="Park I.-C."/>
            <person name="Yoon U.-H."/>
            <person name="Hahn J.-H."/>
            <person name="Koo B.-S."/>
            <person name="Lee G.-B."/>
            <person name="Kim H."/>
            <person name="Park H.-S."/>
            <person name="Yoon K.-O."/>
            <person name="Kim J.-H."/>
            <person name="Jung C.-H."/>
            <person name="Koh N.-H."/>
            <person name="Seo J.-S."/>
            <person name="Go S.-J."/>
        </authorList>
    </citation>
    <scope>NUCLEOTIDE SEQUENCE [LARGE SCALE GENOMIC DNA]</scope>
    <source>
        <strain>KACC10331 / KXO85</strain>
    </source>
</reference>
<proteinExistence type="inferred from homology"/>
<comment type="function">
    <text evidence="1">Catalyzes the reversible phosphorylation of UMP to UDP.</text>
</comment>
<comment type="catalytic activity">
    <reaction evidence="1">
        <text>UMP + ATP = UDP + ADP</text>
        <dbReference type="Rhea" id="RHEA:24400"/>
        <dbReference type="ChEBI" id="CHEBI:30616"/>
        <dbReference type="ChEBI" id="CHEBI:57865"/>
        <dbReference type="ChEBI" id="CHEBI:58223"/>
        <dbReference type="ChEBI" id="CHEBI:456216"/>
        <dbReference type="EC" id="2.7.4.22"/>
    </reaction>
</comment>
<comment type="activity regulation">
    <text evidence="1">Inhibited by UTP.</text>
</comment>
<comment type="pathway">
    <text evidence="1">Pyrimidine metabolism; CTP biosynthesis via de novo pathway; UDP from UMP (UMPK route): step 1/1.</text>
</comment>
<comment type="subunit">
    <text evidence="1">Homohexamer.</text>
</comment>
<comment type="subcellular location">
    <subcellularLocation>
        <location evidence="1">Cytoplasm</location>
    </subcellularLocation>
</comment>
<comment type="similarity">
    <text evidence="1">Belongs to the UMP kinase family.</text>
</comment>
<comment type="sequence caution" evidence="2">
    <conflict type="erroneous initiation">
        <sequence resource="EMBL-CDS" id="AAW75228"/>
    </conflict>
</comment>
<dbReference type="EC" id="2.7.4.22" evidence="1"/>
<dbReference type="EMBL" id="AE013598">
    <property type="protein sequence ID" value="AAW75228.1"/>
    <property type="status" value="ALT_INIT"/>
    <property type="molecule type" value="Genomic_DNA"/>
</dbReference>
<dbReference type="SMR" id="Q5H1E3"/>
<dbReference type="STRING" id="291331.XOO1974"/>
<dbReference type="KEGG" id="xoo:XOO1974"/>
<dbReference type="HOGENOM" id="CLU_033861_0_0_6"/>
<dbReference type="UniPathway" id="UPA00159">
    <property type="reaction ID" value="UER00275"/>
</dbReference>
<dbReference type="Proteomes" id="UP000006735">
    <property type="component" value="Chromosome"/>
</dbReference>
<dbReference type="GO" id="GO:0005829">
    <property type="term" value="C:cytosol"/>
    <property type="evidence" value="ECO:0007669"/>
    <property type="project" value="TreeGrafter"/>
</dbReference>
<dbReference type="GO" id="GO:0005524">
    <property type="term" value="F:ATP binding"/>
    <property type="evidence" value="ECO:0007669"/>
    <property type="project" value="UniProtKB-KW"/>
</dbReference>
<dbReference type="GO" id="GO:0033862">
    <property type="term" value="F:UMP kinase activity"/>
    <property type="evidence" value="ECO:0007669"/>
    <property type="project" value="UniProtKB-EC"/>
</dbReference>
<dbReference type="GO" id="GO:0044210">
    <property type="term" value="P:'de novo' CTP biosynthetic process"/>
    <property type="evidence" value="ECO:0007669"/>
    <property type="project" value="UniProtKB-UniRule"/>
</dbReference>
<dbReference type="GO" id="GO:0006225">
    <property type="term" value="P:UDP biosynthetic process"/>
    <property type="evidence" value="ECO:0007669"/>
    <property type="project" value="TreeGrafter"/>
</dbReference>
<dbReference type="CDD" id="cd04254">
    <property type="entry name" value="AAK_UMPK-PyrH-Ec"/>
    <property type="match status" value="1"/>
</dbReference>
<dbReference type="FunFam" id="3.40.1160.10:FF:000001">
    <property type="entry name" value="Uridylate kinase"/>
    <property type="match status" value="1"/>
</dbReference>
<dbReference type="Gene3D" id="3.40.1160.10">
    <property type="entry name" value="Acetylglutamate kinase-like"/>
    <property type="match status" value="1"/>
</dbReference>
<dbReference type="HAMAP" id="MF_01220_B">
    <property type="entry name" value="PyrH_B"/>
    <property type="match status" value="1"/>
</dbReference>
<dbReference type="InterPro" id="IPR036393">
    <property type="entry name" value="AceGlu_kinase-like_sf"/>
</dbReference>
<dbReference type="InterPro" id="IPR001048">
    <property type="entry name" value="Asp/Glu/Uridylate_kinase"/>
</dbReference>
<dbReference type="InterPro" id="IPR011817">
    <property type="entry name" value="Uridylate_kinase"/>
</dbReference>
<dbReference type="InterPro" id="IPR015963">
    <property type="entry name" value="Uridylate_kinase_bac"/>
</dbReference>
<dbReference type="NCBIfam" id="TIGR02075">
    <property type="entry name" value="pyrH_bact"/>
    <property type="match status" value="1"/>
</dbReference>
<dbReference type="PANTHER" id="PTHR42833">
    <property type="entry name" value="URIDYLATE KINASE"/>
    <property type="match status" value="1"/>
</dbReference>
<dbReference type="PANTHER" id="PTHR42833:SF4">
    <property type="entry name" value="URIDYLATE KINASE PUMPKIN, CHLOROPLASTIC"/>
    <property type="match status" value="1"/>
</dbReference>
<dbReference type="Pfam" id="PF00696">
    <property type="entry name" value="AA_kinase"/>
    <property type="match status" value="1"/>
</dbReference>
<dbReference type="PIRSF" id="PIRSF005650">
    <property type="entry name" value="Uridylate_kin"/>
    <property type="match status" value="1"/>
</dbReference>
<dbReference type="SUPFAM" id="SSF53633">
    <property type="entry name" value="Carbamate kinase-like"/>
    <property type="match status" value="1"/>
</dbReference>
<protein>
    <recommendedName>
        <fullName evidence="1">Uridylate kinase</fullName>
        <shortName evidence="1">UK</shortName>
        <ecNumber evidence="1">2.7.4.22</ecNumber>
    </recommendedName>
    <alternativeName>
        <fullName evidence="1">Uridine monophosphate kinase</fullName>
        <shortName evidence="1">UMP kinase</shortName>
        <shortName evidence="1">UMPK</shortName>
    </alternativeName>
</protein>